<reference key="1">
    <citation type="journal article" date="2005" name="Nature">
        <title>Genomic sequence of the pathogenic and allergenic filamentous fungus Aspergillus fumigatus.</title>
        <authorList>
            <person name="Nierman W.C."/>
            <person name="Pain A."/>
            <person name="Anderson M.J."/>
            <person name="Wortman J.R."/>
            <person name="Kim H.S."/>
            <person name="Arroyo J."/>
            <person name="Berriman M."/>
            <person name="Abe K."/>
            <person name="Archer D.B."/>
            <person name="Bermejo C."/>
            <person name="Bennett J.W."/>
            <person name="Bowyer P."/>
            <person name="Chen D."/>
            <person name="Collins M."/>
            <person name="Coulsen R."/>
            <person name="Davies R."/>
            <person name="Dyer P.S."/>
            <person name="Farman M.L."/>
            <person name="Fedorova N."/>
            <person name="Fedorova N.D."/>
            <person name="Feldblyum T.V."/>
            <person name="Fischer R."/>
            <person name="Fosker N."/>
            <person name="Fraser A."/>
            <person name="Garcia J.L."/>
            <person name="Garcia M.J."/>
            <person name="Goble A."/>
            <person name="Goldman G.H."/>
            <person name="Gomi K."/>
            <person name="Griffith-Jones S."/>
            <person name="Gwilliam R."/>
            <person name="Haas B.J."/>
            <person name="Haas H."/>
            <person name="Harris D.E."/>
            <person name="Horiuchi H."/>
            <person name="Huang J."/>
            <person name="Humphray S."/>
            <person name="Jimenez J."/>
            <person name="Keller N."/>
            <person name="Khouri H."/>
            <person name="Kitamoto K."/>
            <person name="Kobayashi T."/>
            <person name="Konzack S."/>
            <person name="Kulkarni R."/>
            <person name="Kumagai T."/>
            <person name="Lafton A."/>
            <person name="Latge J.-P."/>
            <person name="Li W."/>
            <person name="Lord A."/>
            <person name="Lu C."/>
            <person name="Majoros W.H."/>
            <person name="May G.S."/>
            <person name="Miller B.L."/>
            <person name="Mohamoud Y."/>
            <person name="Molina M."/>
            <person name="Monod M."/>
            <person name="Mouyna I."/>
            <person name="Mulligan S."/>
            <person name="Murphy L.D."/>
            <person name="O'Neil S."/>
            <person name="Paulsen I."/>
            <person name="Penalva M.A."/>
            <person name="Pertea M."/>
            <person name="Price C."/>
            <person name="Pritchard B.L."/>
            <person name="Quail M.A."/>
            <person name="Rabbinowitsch E."/>
            <person name="Rawlins N."/>
            <person name="Rajandream M.A."/>
            <person name="Reichard U."/>
            <person name="Renauld H."/>
            <person name="Robson G.D."/>
            <person name="Rodriguez de Cordoba S."/>
            <person name="Rodriguez-Pena J.M."/>
            <person name="Ronning C.M."/>
            <person name="Rutter S."/>
            <person name="Salzberg S.L."/>
            <person name="Sanchez M."/>
            <person name="Sanchez-Ferrero J.C."/>
            <person name="Saunders D."/>
            <person name="Seeger K."/>
            <person name="Squares R."/>
            <person name="Squares S."/>
            <person name="Takeuchi M."/>
            <person name="Tekaia F."/>
            <person name="Turner G."/>
            <person name="Vazquez de Aldana C.R."/>
            <person name="Weidman J."/>
            <person name="White O."/>
            <person name="Woodward J.R."/>
            <person name="Yu J.-H."/>
            <person name="Fraser C.M."/>
            <person name="Galagan J.E."/>
            <person name="Asai K."/>
            <person name="Machida M."/>
            <person name="Hall N."/>
            <person name="Barrell B.G."/>
            <person name="Denning D.W."/>
        </authorList>
    </citation>
    <scope>NUCLEOTIDE SEQUENCE [LARGE SCALE GENOMIC DNA]</scope>
    <source>
        <strain>ATCC MYA-4609 / CBS 101355 / FGSC A1100 / Af293</strain>
    </source>
</reference>
<reference key="2">
    <citation type="journal article" date="2023" name="Chem. Sci.">
        <title>A heterologous expression platform in Aspergillus nidulans for the elucidation of cryptic secondary metabolism biosynthetic gene clusters: discovery of the Aspergillus fumigatus sartorypyrone biosynthetic pathway.</title>
        <authorList>
            <person name="Lin S.Y."/>
            <person name="Oakley C.E."/>
            <person name="Jenkinson C.B."/>
            <person name="Chiang Y.M."/>
            <person name="Lee C.K."/>
            <person name="Jones C.G."/>
            <person name="Seidler P.M."/>
            <person name="Nelson H.M."/>
            <person name="Todd R.B."/>
            <person name="Wang C.C.C."/>
            <person name="Oakley B.R."/>
        </authorList>
    </citation>
    <scope>FUNCTION</scope>
    <scope>DISRUPTION PHENOTYPE</scope>
    <scope>CATALYTIC ACTIVITY</scope>
    <scope>PATHWAY</scope>
</reference>
<dbReference type="EC" id="2.3.1.-" evidence="3"/>
<dbReference type="EMBL" id="AAHF01000014">
    <property type="protein sequence ID" value="EAL84932.1"/>
    <property type="molecule type" value="Genomic_DNA"/>
</dbReference>
<dbReference type="RefSeq" id="XP_746970.1">
    <property type="nucleotide sequence ID" value="XM_741877.1"/>
</dbReference>
<dbReference type="EnsemblFungi" id="EAL84932">
    <property type="protein sequence ID" value="EAL84932"/>
    <property type="gene ID" value="AFUA_8G02360"/>
</dbReference>
<dbReference type="GeneID" id="3504519"/>
<dbReference type="KEGG" id="afm:AFUA_8G02360"/>
<dbReference type="VEuPathDB" id="FungiDB:Afu8g02360"/>
<dbReference type="eggNOG" id="ENOG502SJEY">
    <property type="taxonomic scope" value="Eukaryota"/>
</dbReference>
<dbReference type="HOGENOM" id="CLU_032731_0_1_1"/>
<dbReference type="InParanoid" id="Q4WBI0"/>
<dbReference type="OMA" id="EWRTRIM"/>
<dbReference type="OrthoDB" id="1077582at2759"/>
<dbReference type="UniPathway" id="UPA00213"/>
<dbReference type="Proteomes" id="UP000002530">
    <property type="component" value="Chromosome 8"/>
</dbReference>
<dbReference type="GO" id="GO:0016020">
    <property type="term" value="C:membrane"/>
    <property type="evidence" value="ECO:0007669"/>
    <property type="project" value="UniProtKB-SubCell"/>
</dbReference>
<dbReference type="GO" id="GO:0008374">
    <property type="term" value="F:O-acyltransferase activity"/>
    <property type="evidence" value="ECO:0007669"/>
    <property type="project" value="InterPro"/>
</dbReference>
<dbReference type="GO" id="GO:0006629">
    <property type="term" value="P:lipid metabolic process"/>
    <property type="evidence" value="ECO:0007669"/>
    <property type="project" value="InterPro"/>
</dbReference>
<dbReference type="InterPro" id="IPR044851">
    <property type="entry name" value="Wax_synthase"/>
</dbReference>
<dbReference type="InterPro" id="IPR032805">
    <property type="entry name" value="Wax_synthase_dom"/>
</dbReference>
<dbReference type="PANTHER" id="PTHR31595">
    <property type="entry name" value="LONG-CHAIN-ALCOHOL O-FATTY-ACYLTRANSFERASE 3-RELATED"/>
    <property type="match status" value="1"/>
</dbReference>
<dbReference type="PANTHER" id="PTHR31595:SF27">
    <property type="entry name" value="WAX SYNTHASE DOMAIN-CONTAINING PROTEIN-RELATED"/>
    <property type="match status" value="1"/>
</dbReference>
<dbReference type="Pfam" id="PF13813">
    <property type="entry name" value="MBOAT_2"/>
    <property type="match status" value="1"/>
</dbReference>
<proteinExistence type="evidence at protein level"/>
<gene>
    <name evidence="4" type="primary">spyB</name>
    <name type="ORF">AFUA_8G02360</name>
</gene>
<accession>Q4WBI0</accession>
<evidence type="ECO:0000255" key="1"/>
<evidence type="ECO:0000255" key="2">
    <source>
        <dbReference type="PROSITE-ProRule" id="PRU00498"/>
    </source>
</evidence>
<evidence type="ECO:0000269" key="3">
    <source>
    </source>
</evidence>
<evidence type="ECO:0000303" key="4">
    <source>
    </source>
</evidence>
<evidence type="ECO:0000305" key="5"/>
<keyword id="KW-0325">Glycoprotein</keyword>
<keyword id="KW-0472">Membrane</keyword>
<keyword id="KW-1185">Reference proteome</keyword>
<keyword id="KW-0808">Transferase</keyword>
<keyword id="KW-0812">Transmembrane</keyword>
<keyword id="KW-1133">Transmembrane helix</keyword>
<name>SPYB_ASPFU</name>
<comment type="function">
    <text evidence="3">Acetyltransferase; part of the gene cluster that mediates the biosynthesis of meroterpenoids called sartorypyrones (PubMed:37860661). SpyB catalyzes the last step of the pathway and is responsible for the acetylation of sartorypyrones D and F to produce sartorypyrones A and G, respectively (PubMed:37860661). The biosynthesis of sartorypyrones begins with the production of triacetic acid lactone (TAL) by the NR-PKS spyA using one molecule of acetyl-CoA and two molecules of malonyl-CoA. The prenyltransferase spyF then conjugates geranylgeranyl pyrophosphate (GGPP) to TAL to form geranylgeranyl-triacetate lactone, for which the pathway-specific geranylgeranyl pyrophosphate synthase (GGPS) spyE is required to provide GGPP. Subsequently, geranylgeranyl-triacetate lactone is epoxidized at the terminal olein by the FAD-dependent monooxygenase spyC, followed by cyclization of the terpenoid component catalyzed by the terpene cyclase spyD to produce both the bicyclic sartorypyrone F and the monocyclic sartorypyrone D. Finally, the last step of the biosynthesis involves the acetylation of the meroterpenoids sartorypyrones D and F by the acetyltransferase SpyB to produce sartorypyrones A and G, respectively (PubMed:37860661).</text>
</comment>
<comment type="catalytic activity">
    <reaction evidence="3">
        <text>sartorypyrone F + acetyl-CoA = sartorypyrone G + CoA</text>
        <dbReference type="Rhea" id="RHEA:80879"/>
        <dbReference type="ChEBI" id="CHEBI:57287"/>
        <dbReference type="ChEBI" id="CHEBI:57288"/>
        <dbReference type="ChEBI" id="CHEBI:231739"/>
        <dbReference type="ChEBI" id="CHEBI:231741"/>
    </reaction>
    <physiologicalReaction direction="left-to-right" evidence="3">
        <dbReference type="Rhea" id="RHEA:80880"/>
    </physiologicalReaction>
</comment>
<comment type="catalytic activity">
    <reaction evidence="3">
        <text>sartorypyrone D + acetyl-CoA = sartorypyrone A + CoA</text>
        <dbReference type="Rhea" id="RHEA:80883"/>
        <dbReference type="ChEBI" id="CHEBI:57287"/>
        <dbReference type="ChEBI" id="CHEBI:57288"/>
        <dbReference type="ChEBI" id="CHEBI:201384"/>
        <dbReference type="ChEBI" id="CHEBI:203993"/>
    </reaction>
    <physiologicalReaction direction="left-to-right" evidence="3">
        <dbReference type="Rhea" id="RHEA:80884"/>
    </physiologicalReaction>
</comment>
<comment type="pathway">
    <text evidence="3">Secondary metabolite biosynthesis; terpenoid biosynthesis.</text>
</comment>
<comment type="subcellular location">
    <subcellularLocation>
        <location evidence="1">Membrane</location>
        <topology evidence="1">Multi-pass membrane protein</topology>
    </subcellularLocation>
</comment>
<comment type="disruption phenotype">
    <text evidence="3">Impairs the production of the acetylated sartorypyrones A and G, but accumulates the unacetylated sartorypyrones D and F, respectively.</text>
</comment>
<comment type="similarity">
    <text evidence="5">Belongs to the wax synthase family.</text>
</comment>
<sequence>MCMDRLVESYPTGDPGDACRILGPIAIMQADLEEISEFGLQTSIFGRPTPISRLHHTVSSLHHFESGHWVSTYKSRPAAFFFTSGDFHSDQFNKAIAGRRDFVRSCRRGHAERNYSGFSLADGTIIWTLKYVPLAASRCLIFLRVIRMQKFSDQVKEMPRRERRVLETLLYALPFLLAQNLVPAILILKTKKNAVLRYLWIFWSVFVFYQWLQIPISHGESGTYVAKVGVQLFIVILQGFNLVLINPLDRDELLQTKVTGPRDDLLRQVYKVARLFTYLRGVRTPWQVKGIPSHPAYLELQPKTPISRSAFLVRQAAIVAWLYLYLNCANSLADRNSSPLSKPIYGLGYLRVSREEWRTRIMTSLMFWFAFLRAAVDIDYRTASILSVGVGLDAPEDWPPLFGRANQAYTLRNFWGTYWHQMFRWPFTATSNYLARELMALPRPSLLERYTNIFFVFLVSGVMHVMSDLLMGISMSQSASILFFCSMAVGVMIEDAVQAAWTRVSDSHRPGGASTVDSDGYAVPCWHKLVGFIWVCVWLSLTTPAWLCPLQMSKEKSLFLVNIPELVGTRKAIAITVGGGLLVKYTFRGEL</sequence>
<feature type="chain" id="PRO_0000461219" description="Acetyltransferase spyB">
    <location>
        <begin position="1"/>
        <end position="591"/>
    </location>
</feature>
<feature type="transmembrane region" description="Helical" evidence="1">
    <location>
        <begin position="123"/>
        <end position="143"/>
    </location>
</feature>
<feature type="transmembrane region" description="Helical" evidence="1">
    <location>
        <begin position="168"/>
        <end position="188"/>
    </location>
</feature>
<feature type="transmembrane region" description="Helical" evidence="1">
    <location>
        <begin position="199"/>
        <end position="219"/>
    </location>
</feature>
<feature type="transmembrane region" description="Helical" evidence="1">
    <location>
        <begin position="228"/>
        <end position="248"/>
    </location>
</feature>
<feature type="transmembrane region" description="Helical" evidence="1">
    <location>
        <begin position="309"/>
        <end position="329"/>
    </location>
</feature>
<feature type="transmembrane region" description="Helical" evidence="1">
    <location>
        <begin position="383"/>
        <end position="403"/>
    </location>
</feature>
<feature type="transmembrane region" description="Helical" evidence="1">
    <location>
        <begin position="453"/>
        <end position="473"/>
    </location>
</feature>
<feature type="transmembrane region" description="Helical" evidence="1">
    <location>
        <begin position="481"/>
        <end position="501"/>
    </location>
</feature>
<feature type="transmembrane region" description="Helical" evidence="1">
    <location>
        <begin position="529"/>
        <end position="549"/>
    </location>
</feature>
<feature type="glycosylation site" description="N-linked (GlcNAc...) asparagine" evidence="2">
    <location>
        <position position="114"/>
    </location>
</feature>
<organism>
    <name type="scientific">Aspergillus fumigatus (strain ATCC MYA-4609 / CBS 101355 / FGSC A1100 / Af293)</name>
    <name type="common">Neosartorya fumigata</name>
    <dbReference type="NCBI Taxonomy" id="330879"/>
    <lineage>
        <taxon>Eukaryota</taxon>
        <taxon>Fungi</taxon>
        <taxon>Dikarya</taxon>
        <taxon>Ascomycota</taxon>
        <taxon>Pezizomycotina</taxon>
        <taxon>Eurotiomycetes</taxon>
        <taxon>Eurotiomycetidae</taxon>
        <taxon>Eurotiales</taxon>
        <taxon>Aspergillaceae</taxon>
        <taxon>Aspergillus</taxon>
        <taxon>Aspergillus subgen. Fumigati</taxon>
    </lineage>
</organism>
<protein>
    <recommendedName>
        <fullName evidence="4">Acetyltransferase spyB</fullName>
        <ecNumber evidence="3">2.3.1.-</ecNumber>
    </recommendedName>
    <alternativeName>
        <fullName evidence="4">Sartorypyrone biosynthesis cluster protein B</fullName>
    </alternativeName>
</protein>